<protein>
    <recommendedName>
        <fullName>DELLA protein GAI1</fullName>
    </recommendedName>
    <alternativeName>
        <fullName>Gibberellic acid-insensitive mutant protein 1</fullName>
    </alternativeName>
    <alternativeName>
        <fullName>VvGAI1</fullName>
    </alternativeName>
</protein>
<feature type="chain" id="PRO_0000132248" description="DELLA protein GAI1">
    <location>
        <begin position="1"/>
        <end position="590"/>
    </location>
</feature>
<feature type="domain" description="GRAS" evidence="2">
    <location>
        <begin position="205"/>
        <end position="575"/>
    </location>
</feature>
<feature type="region of interest" description="Disordered" evidence="3">
    <location>
        <begin position="1"/>
        <end position="28"/>
    </location>
</feature>
<feature type="region of interest" description="Disordered" evidence="3">
    <location>
        <begin position="153"/>
        <end position="182"/>
    </location>
</feature>
<feature type="region of interest" description="Leucine repeat I (LRI)" evidence="2">
    <location>
        <begin position="212"/>
        <end position="266"/>
    </location>
</feature>
<feature type="region of interest" description="VHIID" evidence="2">
    <location>
        <begin position="284"/>
        <end position="349"/>
    </location>
</feature>
<feature type="region of interest" description="Leucine repeat II (LRII)" evidence="2">
    <location>
        <begin position="363"/>
        <end position="395"/>
    </location>
</feature>
<feature type="region of interest" description="PFYRE" evidence="2">
    <location>
        <begin position="405"/>
        <end position="496"/>
    </location>
</feature>
<feature type="region of interest" description="SAW" evidence="2">
    <location>
        <begin position="499"/>
        <end position="575"/>
    </location>
</feature>
<feature type="short sequence motif" description="DELLA motif">
    <location>
        <begin position="35"/>
        <end position="39"/>
    </location>
</feature>
<feature type="short sequence motif" description="VHIID" evidence="2">
    <location>
        <begin position="315"/>
        <end position="319"/>
    </location>
</feature>
<feature type="short sequence motif" description="LXXLL motif" evidence="2">
    <location>
        <begin position="413"/>
        <end position="417"/>
    </location>
</feature>
<feature type="compositionally biased region" description="Basic residues" evidence="3">
    <location>
        <begin position="1"/>
        <end position="10"/>
    </location>
</feature>
<feature type="sequence variant" description="In Pinot Meunier L1 layer; induces the formation of influorescence instead of grapewine tendrils." evidence="4">
    <original>L</original>
    <variation>H</variation>
    <location>
        <position position="38"/>
    </location>
</feature>
<feature type="sequence conflict" description="In Ref. 2; AAP20096." evidence="5" ref="2">
    <original>N</original>
    <variation>S</variation>
    <location>
        <position position="387"/>
    </location>
</feature>
<gene>
    <name type="primary">GAI1</name>
</gene>
<reference key="1">
    <citation type="journal article" date="2002" name="Nature">
        <title>Association of dwarfism and floral induction with a grape 'green revolution' mutation.</title>
        <authorList>
            <person name="Boss P.K."/>
            <person name="Thomas M.R."/>
        </authorList>
    </citation>
    <scope>NUCLEOTIDE SEQUENCE [GENOMIC DNA]</scope>
    <scope>VARIANT HIS-38</scope>
    <source>
        <strain>cv. Pinot Meunier</strain>
    </source>
</reference>
<reference key="2">
    <citation type="submission" date="2003-03" db="EMBL/GenBank/DDBJ databases">
        <authorList>
            <person name="Joly D."/>
            <person name="Perrin M."/>
            <person name="Gertz C."/>
            <person name="Masson J.E."/>
        </authorList>
    </citation>
    <scope>NUCLEOTIDE SEQUENCE [MRNA] OF 294-440</scope>
    <source>
        <strain>cv. Riesling</strain>
    </source>
</reference>
<proteinExistence type="evidence at transcript level"/>
<comment type="function">
    <text>Probable transcriptional regulator that acts as a repressor of the gibberellin (GA) signaling pathway. Probably acts by participating in large multiprotein complexes that repress transcription of GA-inducible genes. Upon GA application, it is degraded by the proteasome, allowing the GA signaling pathway.</text>
</comment>
<comment type="subcellular location">
    <subcellularLocation>
        <location evidence="1">Nucleus</location>
    </subcellularLocation>
</comment>
<comment type="domain">
    <text evidence="1">The DELLA motif is required for its GA-induced degradation.</text>
</comment>
<comment type="PTM">
    <text evidence="1">Phosphorylated.</text>
</comment>
<comment type="PTM">
    <text evidence="1">Ubiquitinated. Upon GA application it is ubiquitinated, leading to its subsequent degradation (By similarity).</text>
</comment>
<comment type="polymorphism">
    <text>In cv. Pinot Meunier, 1 of the 3 cultivars used for the sparkling wine Champagne, plants are genetically indistinguishable from Pinot noir in most cells, but their outer layer, the 'L1' epidermal cell layer, is different: cv. Pinot Meunier has a furry surface on its leaves whereas Pinot noir does not. This is due to the Ser-387 variant that is present only in cells of the L1 layer that causes this difference, demonstrating that GA inhibits flowering in grapewine.</text>
</comment>
<comment type="similarity">
    <text evidence="5">Belongs to the GRAS family. DELLA subfamily.</text>
</comment>
<comment type="online information" name="Protein Spotlight">
    <link uri="https://www.proteinspotlight.org/back_issues/070"/>
    <text>All things dwarfed and beautiful - Issue 70 of May 2006</text>
</comment>
<accession>Q8S4W7</accession>
<accession>Q84MI8</accession>
<sequence>MKREYHHPHHPTCSTSPTGKGKMWDADPQQDAGMDELLAVLGYNVKASDMAEVAQKLEQLEEVIVNAQEDGLSHLASETVHYNPSDLSNWLGSMLSEFNPTPNCALDNPFLPPISPLDYTNCSTQPKQEPSIFDSPSLDYDLKAIPGKALYSHIEQPPQQPPAPPLYQRDNKRLKPTTSATANSVSSVIGGWGVPTESARPVVLVDSQETGIRLVHTLMACAEAVQQENLKLAEALVKQIGFLAVSQAGAMRKVATYFAEGLARRIYRLYPDKPLDSSFSDILQMHFYETCPYLKFAHFTANQAILEAFEGKKRVHVIDFSMKQGMQWPALMQALALRPGGPPSFRLTGIGPPSTDNTDHLHEVGWKLAQLAETIHVEFEYRGFVANSLADLDASMLELRDGESVAVNSVFELHSLLARPGGIERVLSAVKDMKPDIVTIVEQEANHNGPVFLDRFTESLHYYSTLFDSLEGCGVSPVNTQDKLMSEVYLGQQICNVVACEGPERVERHETLAQWRARLGSAGFDPVNLGSNAFKQASMLLALFAGGDGYRVEENNGCLMLGWHTRPLIATSAWQLANKPALPSSTPASN</sequence>
<dbReference type="EMBL" id="AF378125">
    <property type="protein sequence ID" value="AAM19210.1"/>
    <property type="molecule type" value="Genomic_DNA"/>
</dbReference>
<dbReference type="EMBL" id="AY256862">
    <property type="protein sequence ID" value="AAP20096.1"/>
    <property type="molecule type" value="mRNA"/>
</dbReference>
<dbReference type="RefSeq" id="XP_002284648.1">
    <property type="nucleotide sequence ID" value="XM_002284612.4"/>
</dbReference>
<dbReference type="SMR" id="Q8S4W7"/>
<dbReference type="PaxDb" id="29760-VIT_01s0011g05260.t01"/>
<dbReference type="EnsemblPlants" id="Vitvi01g00446_t001">
    <property type="protein sequence ID" value="Vitvi01g00446_P001"/>
    <property type="gene ID" value="Vitvi01g00446"/>
</dbReference>
<dbReference type="Gramene" id="Vitvi01g00446_t001">
    <property type="protein sequence ID" value="Vitvi01g00446_P001"/>
    <property type="gene ID" value="Vitvi01g00446"/>
</dbReference>
<dbReference type="eggNOG" id="ENOG502QPMG">
    <property type="taxonomic scope" value="Eukaryota"/>
</dbReference>
<dbReference type="HOGENOM" id="CLU_011924_4_0_1"/>
<dbReference type="OrthoDB" id="761920at2759"/>
<dbReference type="ExpressionAtlas" id="Q8S4W7">
    <property type="expression patterns" value="baseline and differential"/>
</dbReference>
<dbReference type="GO" id="GO:0005634">
    <property type="term" value="C:nucleus"/>
    <property type="evidence" value="ECO:0007669"/>
    <property type="project" value="UniProtKB-SubCell"/>
</dbReference>
<dbReference type="GO" id="GO:0009740">
    <property type="term" value="P:gibberellic acid mediated signaling pathway"/>
    <property type="evidence" value="ECO:0007669"/>
    <property type="project" value="UniProtKB-KW"/>
</dbReference>
<dbReference type="FunFam" id="1.10.10.1290:FF:000001">
    <property type="entry name" value="DELLA protein GAI"/>
    <property type="match status" value="1"/>
</dbReference>
<dbReference type="Gene3D" id="1.10.10.1290">
    <property type="entry name" value="Transcriptional regulator DELLA, N-terminal domain"/>
    <property type="match status" value="1"/>
</dbReference>
<dbReference type="InterPro" id="IPR038088">
    <property type="entry name" value="DELLA_N_sf"/>
</dbReference>
<dbReference type="InterPro" id="IPR021914">
    <property type="entry name" value="TF_DELLA_N"/>
</dbReference>
<dbReference type="InterPro" id="IPR005202">
    <property type="entry name" value="TF_GRAS"/>
</dbReference>
<dbReference type="PANTHER" id="PTHR31636">
    <property type="entry name" value="OSJNBA0084A10.13 PROTEIN-RELATED"/>
    <property type="match status" value="1"/>
</dbReference>
<dbReference type="Pfam" id="PF12041">
    <property type="entry name" value="DELLA"/>
    <property type="match status" value="1"/>
</dbReference>
<dbReference type="Pfam" id="PF03514">
    <property type="entry name" value="GRAS"/>
    <property type="match status" value="1"/>
</dbReference>
<dbReference type="SMART" id="SM01129">
    <property type="entry name" value="DELLA"/>
    <property type="match status" value="1"/>
</dbReference>
<dbReference type="PROSITE" id="PS50985">
    <property type="entry name" value="GRAS"/>
    <property type="match status" value="1"/>
</dbReference>
<keyword id="KW-0939">Gibberellin signaling pathway</keyword>
<keyword id="KW-0539">Nucleus</keyword>
<keyword id="KW-0597">Phosphoprotein</keyword>
<keyword id="KW-0678">Repressor</keyword>
<keyword id="KW-0804">Transcription</keyword>
<keyword id="KW-0805">Transcription regulation</keyword>
<keyword id="KW-0832">Ubl conjugation</keyword>
<organism>
    <name type="scientific">Vitis vinifera</name>
    <name type="common">Grape</name>
    <dbReference type="NCBI Taxonomy" id="29760"/>
    <lineage>
        <taxon>Eukaryota</taxon>
        <taxon>Viridiplantae</taxon>
        <taxon>Streptophyta</taxon>
        <taxon>Embryophyta</taxon>
        <taxon>Tracheophyta</taxon>
        <taxon>Spermatophyta</taxon>
        <taxon>Magnoliopsida</taxon>
        <taxon>eudicotyledons</taxon>
        <taxon>Gunneridae</taxon>
        <taxon>Pentapetalae</taxon>
        <taxon>rosids</taxon>
        <taxon>Vitales</taxon>
        <taxon>Vitaceae</taxon>
        <taxon>Viteae</taxon>
        <taxon>Vitis</taxon>
    </lineage>
</organism>
<name>GAI1_VITVI</name>
<evidence type="ECO:0000250" key="1"/>
<evidence type="ECO:0000255" key="2">
    <source>
        <dbReference type="PROSITE-ProRule" id="PRU01191"/>
    </source>
</evidence>
<evidence type="ECO:0000256" key="3">
    <source>
        <dbReference type="SAM" id="MobiDB-lite"/>
    </source>
</evidence>
<evidence type="ECO:0000269" key="4">
    <source>
    </source>
</evidence>
<evidence type="ECO:0000305" key="5"/>